<dbReference type="EC" id="4.6.1.14"/>
<dbReference type="EMBL" id="AJ000079">
    <property type="protein sequence ID" value="CAA03904.1"/>
    <property type="molecule type" value="Genomic_DNA"/>
</dbReference>
<dbReference type="VEuPathDB" id="TriTrypDB:BCY84_05557"/>
<dbReference type="VEuPathDB" id="TriTrypDB:C3747_94g187"/>
<dbReference type="VEuPathDB" id="TriTrypDB:C4B63_9g417"/>
<dbReference type="VEuPathDB" id="TriTrypDB:ECC02_006977"/>
<dbReference type="VEuPathDB" id="TriTrypDB:Tc_MARK_9648"/>
<dbReference type="VEuPathDB" id="TriTrypDB:TcBrA4_0101930"/>
<dbReference type="VEuPathDB" id="TriTrypDB:TcCL_ESM05365"/>
<dbReference type="VEuPathDB" id="TriTrypDB:TcCLB.506821.30"/>
<dbReference type="VEuPathDB" id="TriTrypDB:TcCLB.508765.30"/>
<dbReference type="VEuPathDB" id="TriTrypDB:TCDM_08177"/>
<dbReference type="VEuPathDB" id="TriTrypDB:TcG_07569"/>
<dbReference type="VEuPathDB" id="TriTrypDB:TCSYLVIO_000264"/>
<dbReference type="VEuPathDB" id="TriTrypDB:TcYC6_0077870"/>
<dbReference type="OrthoDB" id="1046782at2759"/>
<dbReference type="GO" id="GO:0016020">
    <property type="term" value="C:membrane"/>
    <property type="evidence" value="ECO:0007669"/>
    <property type="project" value="UniProtKB-SubCell"/>
</dbReference>
<dbReference type="GO" id="GO:0047396">
    <property type="term" value="F:glycosylphosphatidylinositol diacylglycerol-lyase activity"/>
    <property type="evidence" value="ECO:0007669"/>
    <property type="project" value="UniProtKB-EC"/>
</dbReference>
<dbReference type="GO" id="GO:0008081">
    <property type="term" value="F:phosphoric diester hydrolase activity"/>
    <property type="evidence" value="ECO:0007669"/>
    <property type="project" value="InterPro"/>
</dbReference>
<dbReference type="GO" id="GO:0006629">
    <property type="term" value="P:lipid metabolic process"/>
    <property type="evidence" value="ECO:0007669"/>
    <property type="project" value="InterPro"/>
</dbReference>
<dbReference type="CDD" id="cd08587">
    <property type="entry name" value="PI-PLCXDc_like"/>
    <property type="match status" value="1"/>
</dbReference>
<dbReference type="Gene3D" id="3.20.20.190">
    <property type="entry name" value="Phosphatidylinositol (PI) phosphodiesterase"/>
    <property type="match status" value="1"/>
</dbReference>
<dbReference type="InterPro" id="IPR051057">
    <property type="entry name" value="PI-PLC_domain"/>
</dbReference>
<dbReference type="InterPro" id="IPR017946">
    <property type="entry name" value="PLC-like_Pdiesterase_TIM-brl"/>
</dbReference>
<dbReference type="InterPro" id="IPR000909">
    <property type="entry name" value="PLipase_C_PInositol-sp_X_dom"/>
</dbReference>
<dbReference type="PANTHER" id="PTHR13593">
    <property type="match status" value="1"/>
</dbReference>
<dbReference type="PANTHER" id="PTHR13593:SF113">
    <property type="entry name" value="SI:DKEY-266F7.9"/>
    <property type="match status" value="1"/>
</dbReference>
<dbReference type="SMART" id="SM00148">
    <property type="entry name" value="PLCXc"/>
    <property type="match status" value="1"/>
</dbReference>
<dbReference type="SUPFAM" id="SSF51695">
    <property type="entry name" value="PLC-like phosphodiesterases"/>
    <property type="match status" value="1"/>
</dbReference>
<dbReference type="PROSITE" id="PS50007">
    <property type="entry name" value="PIPLC_X_DOMAIN"/>
    <property type="match status" value="1"/>
</dbReference>
<accession>O15886</accession>
<reference key="1">
    <citation type="journal article" date="1998" name="Mol. Biochem. Parasitol.">
        <title>Conservation of genetic linkage between heat shock protein 100 and glycosylphosphatidylinositol-specific phospholipase C in Trypanosoma brucei and Trypanosoma cruzi.</title>
        <authorList>
            <person name="Redpath M.B."/>
            <person name="Carnall N."/>
            <person name="Webb H."/>
            <person name="Courel M."/>
            <person name="Amorim A."/>
            <person name="Guther M.L.S."/>
            <person name="Cardoso de Almeida M.L."/>
            <person name="Carrington M."/>
        </authorList>
    </citation>
    <scope>NUCLEOTIDE SEQUENCE [GENOMIC DNA]</scope>
</reference>
<sequence>MLPESDDFTNTAWHPQSWMHDLRSFIGEMAITQVCFVGSHDAASYGVSKDSPFGADAPGFLLGDSVFASLLRFLFRGICASWSRCQWMSVRAQLNHGVRYLDMRVATNPEDASRLYTLHHQISVPLADVLEDVKAFLNDPLSADEFIVLDFQHLYLTDDSDGKGKFFRELDRLSDRFIPVDVPLTTPLEFLWRASSRRRIFLVVGSGEDESPYPAARIRSKCMVSRWVNENSLRKLLEALDNLLLDDLKYPQTGVPSKLYVTQAVFTPRYSDIFLGIFPKISRRVVSSIYDVATRVNPSLLEWFYSLNARGLLDGMKVMIPSGINTHGNIFMLDCVELGSCQIMDGTTETNAVGMCVYLNILRASRLFEDSSAAPSLNEG</sequence>
<proteinExistence type="inferred from homology"/>
<organism>
    <name type="scientific">Trypanosoma cruzi</name>
    <dbReference type="NCBI Taxonomy" id="5693"/>
    <lineage>
        <taxon>Eukaryota</taxon>
        <taxon>Discoba</taxon>
        <taxon>Euglenozoa</taxon>
        <taxon>Kinetoplastea</taxon>
        <taxon>Metakinetoplastina</taxon>
        <taxon>Trypanosomatida</taxon>
        <taxon>Trypanosomatidae</taxon>
        <taxon>Trypanosoma</taxon>
        <taxon>Schizotrypanum</taxon>
    </lineage>
</organism>
<comment type="function">
    <text evidence="1">By hydrolysis of the attached glycolipid, releases soluble variant surface glycoprotein containing phosphoinositol from the cell wall of T.brucei after cell lysis. It also cleaves similar membrane anchors on some mammalian proteins. VSG lipase may play a role in processes such as parasite differentiation or antigenic variation (By similarity).</text>
</comment>
<comment type="catalytic activity">
    <reaction>
        <text>a 6-(alpha-D-glucosaminyl)-1-(1,2-diacyl-sn-glycero-3-phospho)-1D-myo-inositol = 6-(alpha-D-glucosaminyl)-1D-myo-inositol 1,2-cyclic phosphate + a 1,2-diacyl-sn-glycerol</text>
        <dbReference type="Rhea" id="RHEA:14333"/>
        <dbReference type="ChEBI" id="CHEBI:17815"/>
        <dbReference type="ChEBI" id="CHEBI:57997"/>
        <dbReference type="ChEBI" id="CHEBI:58891"/>
        <dbReference type="EC" id="4.6.1.14"/>
    </reaction>
</comment>
<comment type="subunit">
    <text evidence="1">Monomer.</text>
</comment>
<comment type="subcellular location">
    <subcellularLocation>
        <location>Membrane</location>
        <topology>Peripheral membrane protein</topology>
    </subcellularLocation>
</comment>
<feature type="chain" id="PRO_0000088484" description="Variant-surface-glycoprotein phospholipase C">
    <location>
        <begin position="1"/>
        <end position="380"/>
    </location>
</feature>
<feature type="domain" description="PI-PLC X-box" evidence="2">
    <location>
        <begin position="31"/>
        <end position="205"/>
    </location>
</feature>
<protein>
    <recommendedName>
        <fullName>Variant-surface-glycoprotein phospholipase C</fullName>
        <shortName>VSG lipase</shortName>
        <ecNumber>4.6.1.14</ecNumber>
    </recommendedName>
    <alternativeName>
        <fullName>Glycosylphosphatidylinositol-specific phospholipase C</fullName>
        <shortName>GPI-PLC</shortName>
    </alternativeName>
</protein>
<keyword id="KW-0456">Lyase</keyword>
<keyword id="KW-0472">Membrane</keyword>
<name>PHLC_TRYCR</name>
<evidence type="ECO:0000250" key="1"/>
<evidence type="ECO:0000255" key="2">
    <source>
        <dbReference type="PROSITE-ProRule" id="PRU00270"/>
    </source>
</evidence>